<gene>
    <name evidence="1" type="primary">murG</name>
    <name type="ordered locus">cce_1284</name>
</gene>
<protein>
    <recommendedName>
        <fullName evidence="1">UDP-N-acetylglucosamine--N-acetylmuramyl-(pentapeptide) pyrophosphoryl-undecaprenol N-acetylglucosamine transferase</fullName>
        <ecNumber evidence="1">2.4.1.227</ecNumber>
    </recommendedName>
    <alternativeName>
        <fullName evidence="1">Undecaprenyl-PP-MurNAc-pentapeptide-UDPGlcNAc GlcNAc transferase</fullName>
    </alternativeName>
</protein>
<proteinExistence type="inferred from homology"/>
<name>MURG_CROS5</name>
<feature type="chain" id="PRO_1000192125" description="UDP-N-acetylglucosamine--N-acetylmuramyl-(pentapeptide) pyrophosphoryl-undecaprenol N-acetylglucosamine transferase">
    <location>
        <begin position="1"/>
        <end position="348"/>
    </location>
</feature>
<feature type="binding site" evidence="1">
    <location>
        <begin position="11"/>
        <end position="13"/>
    </location>
    <ligand>
        <name>UDP-N-acetyl-alpha-D-glucosamine</name>
        <dbReference type="ChEBI" id="CHEBI:57705"/>
    </ligand>
</feature>
<feature type="binding site" evidence="1">
    <location>
        <position position="120"/>
    </location>
    <ligand>
        <name>UDP-N-acetyl-alpha-D-glucosamine</name>
        <dbReference type="ChEBI" id="CHEBI:57705"/>
    </ligand>
</feature>
<feature type="binding site" evidence="1">
    <location>
        <position position="161"/>
    </location>
    <ligand>
        <name>UDP-N-acetyl-alpha-D-glucosamine</name>
        <dbReference type="ChEBI" id="CHEBI:57705"/>
    </ligand>
</feature>
<feature type="binding site" evidence="1">
    <location>
        <position position="187"/>
    </location>
    <ligand>
        <name>UDP-N-acetyl-alpha-D-glucosamine</name>
        <dbReference type="ChEBI" id="CHEBI:57705"/>
    </ligand>
</feature>
<feature type="binding site" evidence="1">
    <location>
        <position position="281"/>
    </location>
    <ligand>
        <name>UDP-N-acetyl-alpha-D-glucosamine</name>
        <dbReference type="ChEBI" id="CHEBI:57705"/>
    </ligand>
</feature>
<keyword id="KW-0131">Cell cycle</keyword>
<keyword id="KW-0132">Cell division</keyword>
<keyword id="KW-0997">Cell inner membrane</keyword>
<keyword id="KW-1003">Cell membrane</keyword>
<keyword id="KW-0133">Cell shape</keyword>
<keyword id="KW-0961">Cell wall biogenesis/degradation</keyword>
<keyword id="KW-0328">Glycosyltransferase</keyword>
<keyword id="KW-0472">Membrane</keyword>
<keyword id="KW-0573">Peptidoglycan synthesis</keyword>
<keyword id="KW-1185">Reference proteome</keyword>
<keyword id="KW-0808">Transferase</keyword>
<accession>B1WVP7</accession>
<sequence length="348" mass="38029">MARLLIAASGTGGHVFPALGVAEKLSDYEIQWLGTPNRLEQSLVGDRYPFHTISVEGFQTRSPIKKLKILLGLLSSIFEVKQLIEQQKIDVVFTTGGYIASSAILAAKLSGIPAILHESNYIPGKVTKLLSRFCTTVALGFEGTKQYLPTTPTIWVSTPVRSQFYTSQPLDLNIPNDVPLIVIIGGSQGAVSVNQLVRQCVPYWLEMGAYVVHLTGKNDPNANSLQDPQYITLPFYDNMAGLLQRADLAVSRAGSGTLTELAITKTPAILIPYPFAAEDHQSFNAQVFVDAGAAYCYQQKELTDKILTDLVSDLLNHPDKLKEMSNKSSELAVMDSSEKLAKLIRDSI</sequence>
<dbReference type="EC" id="2.4.1.227" evidence="1"/>
<dbReference type="EMBL" id="CP000806">
    <property type="protein sequence ID" value="ACB50634.1"/>
    <property type="molecule type" value="Genomic_DNA"/>
</dbReference>
<dbReference type="RefSeq" id="WP_009544108.1">
    <property type="nucleotide sequence ID" value="NC_010546.1"/>
</dbReference>
<dbReference type="SMR" id="B1WVP7"/>
<dbReference type="STRING" id="43989.cce_1284"/>
<dbReference type="CAZy" id="GT28">
    <property type="family name" value="Glycosyltransferase Family 28"/>
</dbReference>
<dbReference type="KEGG" id="cyt:cce_1284"/>
<dbReference type="eggNOG" id="COG0707">
    <property type="taxonomic scope" value="Bacteria"/>
</dbReference>
<dbReference type="HOGENOM" id="CLU_037404_0_1_3"/>
<dbReference type="OrthoDB" id="9808936at2"/>
<dbReference type="UniPathway" id="UPA00219"/>
<dbReference type="Proteomes" id="UP000001203">
    <property type="component" value="Chromosome circular"/>
</dbReference>
<dbReference type="GO" id="GO:0005886">
    <property type="term" value="C:plasma membrane"/>
    <property type="evidence" value="ECO:0007669"/>
    <property type="project" value="UniProtKB-SubCell"/>
</dbReference>
<dbReference type="GO" id="GO:0051991">
    <property type="term" value="F:UDP-N-acetyl-D-glucosamine:N-acetylmuramoyl-L-alanyl-D-glutamyl-meso-2,6-diaminopimelyl-D-alanyl-D-alanine-diphosphoundecaprenol 4-beta-N-acetylglucosaminlytransferase activity"/>
    <property type="evidence" value="ECO:0007669"/>
    <property type="project" value="RHEA"/>
</dbReference>
<dbReference type="GO" id="GO:0050511">
    <property type="term" value="F:undecaprenyldiphospho-muramoylpentapeptide beta-N-acetylglucosaminyltransferase activity"/>
    <property type="evidence" value="ECO:0007669"/>
    <property type="project" value="UniProtKB-UniRule"/>
</dbReference>
<dbReference type="GO" id="GO:0005975">
    <property type="term" value="P:carbohydrate metabolic process"/>
    <property type="evidence" value="ECO:0007669"/>
    <property type="project" value="InterPro"/>
</dbReference>
<dbReference type="GO" id="GO:0051301">
    <property type="term" value="P:cell division"/>
    <property type="evidence" value="ECO:0007669"/>
    <property type="project" value="UniProtKB-KW"/>
</dbReference>
<dbReference type="GO" id="GO:0071555">
    <property type="term" value="P:cell wall organization"/>
    <property type="evidence" value="ECO:0007669"/>
    <property type="project" value="UniProtKB-KW"/>
</dbReference>
<dbReference type="GO" id="GO:0030259">
    <property type="term" value="P:lipid glycosylation"/>
    <property type="evidence" value="ECO:0007669"/>
    <property type="project" value="UniProtKB-UniRule"/>
</dbReference>
<dbReference type="GO" id="GO:0009252">
    <property type="term" value="P:peptidoglycan biosynthetic process"/>
    <property type="evidence" value="ECO:0007669"/>
    <property type="project" value="UniProtKB-UniRule"/>
</dbReference>
<dbReference type="GO" id="GO:0008360">
    <property type="term" value="P:regulation of cell shape"/>
    <property type="evidence" value="ECO:0007669"/>
    <property type="project" value="UniProtKB-KW"/>
</dbReference>
<dbReference type="CDD" id="cd03785">
    <property type="entry name" value="GT28_MurG"/>
    <property type="match status" value="1"/>
</dbReference>
<dbReference type="Gene3D" id="3.40.50.2000">
    <property type="entry name" value="Glycogen Phosphorylase B"/>
    <property type="match status" value="2"/>
</dbReference>
<dbReference type="HAMAP" id="MF_00033">
    <property type="entry name" value="MurG"/>
    <property type="match status" value="1"/>
</dbReference>
<dbReference type="InterPro" id="IPR006009">
    <property type="entry name" value="GlcNAc_MurG"/>
</dbReference>
<dbReference type="InterPro" id="IPR007235">
    <property type="entry name" value="Glyco_trans_28_C"/>
</dbReference>
<dbReference type="InterPro" id="IPR004276">
    <property type="entry name" value="GlycoTrans_28_N"/>
</dbReference>
<dbReference type="NCBIfam" id="TIGR01133">
    <property type="entry name" value="murG"/>
    <property type="match status" value="1"/>
</dbReference>
<dbReference type="PANTHER" id="PTHR21015:SF22">
    <property type="entry name" value="GLYCOSYLTRANSFERASE"/>
    <property type="match status" value="1"/>
</dbReference>
<dbReference type="PANTHER" id="PTHR21015">
    <property type="entry name" value="UDP-N-ACETYLGLUCOSAMINE--N-ACETYLMURAMYL-(PENTAPEPTIDE) PYROPHOSPHORYL-UNDECAPRENOL N-ACETYLGLUCOSAMINE TRANSFERASE 1"/>
    <property type="match status" value="1"/>
</dbReference>
<dbReference type="Pfam" id="PF04101">
    <property type="entry name" value="Glyco_tran_28_C"/>
    <property type="match status" value="1"/>
</dbReference>
<dbReference type="Pfam" id="PF03033">
    <property type="entry name" value="Glyco_transf_28"/>
    <property type="match status" value="1"/>
</dbReference>
<dbReference type="SUPFAM" id="SSF53756">
    <property type="entry name" value="UDP-Glycosyltransferase/glycogen phosphorylase"/>
    <property type="match status" value="1"/>
</dbReference>
<comment type="function">
    <text evidence="1">Cell wall formation. Catalyzes the transfer of a GlcNAc subunit on undecaprenyl-pyrophosphoryl-MurNAc-pentapeptide (lipid intermediate I) to form undecaprenyl-pyrophosphoryl-MurNAc-(pentapeptide)GlcNAc (lipid intermediate II).</text>
</comment>
<comment type="catalytic activity">
    <reaction evidence="1">
        <text>di-trans,octa-cis-undecaprenyl diphospho-N-acetyl-alpha-D-muramoyl-L-alanyl-D-glutamyl-meso-2,6-diaminopimeloyl-D-alanyl-D-alanine + UDP-N-acetyl-alpha-D-glucosamine = di-trans,octa-cis-undecaprenyl diphospho-[N-acetyl-alpha-D-glucosaminyl-(1-&gt;4)]-N-acetyl-alpha-D-muramoyl-L-alanyl-D-glutamyl-meso-2,6-diaminopimeloyl-D-alanyl-D-alanine + UDP + H(+)</text>
        <dbReference type="Rhea" id="RHEA:31227"/>
        <dbReference type="ChEBI" id="CHEBI:15378"/>
        <dbReference type="ChEBI" id="CHEBI:57705"/>
        <dbReference type="ChEBI" id="CHEBI:58223"/>
        <dbReference type="ChEBI" id="CHEBI:61387"/>
        <dbReference type="ChEBI" id="CHEBI:61388"/>
        <dbReference type="EC" id="2.4.1.227"/>
    </reaction>
</comment>
<comment type="pathway">
    <text evidence="1">Cell wall biogenesis; peptidoglycan biosynthesis.</text>
</comment>
<comment type="subcellular location">
    <subcellularLocation>
        <location evidence="1">Cell inner membrane</location>
        <topology evidence="1">Peripheral membrane protein</topology>
        <orientation evidence="1">Cytoplasmic side</orientation>
    </subcellularLocation>
</comment>
<comment type="similarity">
    <text evidence="1">Belongs to the glycosyltransferase 28 family. MurG subfamily.</text>
</comment>
<organism>
    <name type="scientific">Crocosphaera subtropica (strain ATCC 51142 / BH68)</name>
    <name type="common">Cyanothece sp. (strain ATCC 51142)</name>
    <dbReference type="NCBI Taxonomy" id="43989"/>
    <lineage>
        <taxon>Bacteria</taxon>
        <taxon>Bacillati</taxon>
        <taxon>Cyanobacteriota</taxon>
        <taxon>Cyanophyceae</taxon>
        <taxon>Oscillatoriophycideae</taxon>
        <taxon>Chroococcales</taxon>
        <taxon>Aphanothecaceae</taxon>
        <taxon>Crocosphaera</taxon>
        <taxon>Crocosphaera subtropica</taxon>
    </lineage>
</organism>
<reference key="1">
    <citation type="journal article" date="2008" name="Proc. Natl. Acad. Sci. U.S.A.">
        <title>The genome of Cyanothece 51142, a unicellular diazotrophic cyanobacterium important in the marine nitrogen cycle.</title>
        <authorList>
            <person name="Welsh E.A."/>
            <person name="Liberton M."/>
            <person name="Stoeckel J."/>
            <person name="Loh T."/>
            <person name="Elvitigala T."/>
            <person name="Wang C."/>
            <person name="Wollam A."/>
            <person name="Fulton R.S."/>
            <person name="Clifton S.W."/>
            <person name="Jacobs J.M."/>
            <person name="Aurora R."/>
            <person name="Ghosh B.K."/>
            <person name="Sherman L.A."/>
            <person name="Smith R.D."/>
            <person name="Wilson R.K."/>
            <person name="Pakrasi H.B."/>
        </authorList>
    </citation>
    <scope>NUCLEOTIDE SEQUENCE [LARGE SCALE GENOMIC DNA]</scope>
    <source>
        <strain>ATCC 51142 / BH68</strain>
    </source>
</reference>
<evidence type="ECO:0000255" key="1">
    <source>
        <dbReference type="HAMAP-Rule" id="MF_00033"/>
    </source>
</evidence>